<name>YQGF_STRPG</name>
<sequence>MRIMGLDVGSKTVGVAISDPLGFTAQGLEIIKIDEEKAEFGFTRLEELVKQYQVEQFVIGLPKNMNNTNGPRVDASITYGNHIEHLFGLPVHYQDERLTTVEAERMLIEQADISRGKRKKVIDKLAAQLILQNYLNRNF</sequence>
<reference key="1">
    <citation type="journal article" date="2007" name="J. Bacteriol.">
        <title>Complete genome of acute rheumatic fever-associated serotype M5 Streptococcus pyogenes strain Manfredo.</title>
        <authorList>
            <person name="Holden M.T.G."/>
            <person name="Scott A."/>
            <person name="Cherevach I."/>
            <person name="Chillingworth T."/>
            <person name="Churcher C."/>
            <person name="Cronin A."/>
            <person name="Dowd L."/>
            <person name="Feltwell T."/>
            <person name="Hamlin N."/>
            <person name="Holroyd S."/>
            <person name="Jagels K."/>
            <person name="Moule S."/>
            <person name="Mungall K."/>
            <person name="Quail M.A."/>
            <person name="Price C."/>
            <person name="Rabbinowitsch E."/>
            <person name="Sharp S."/>
            <person name="Skelton J."/>
            <person name="Whitehead S."/>
            <person name="Barrell B.G."/>
            <person name="Kehoe M."/>
            <person name="Parkhill J."/>
        </authorList>
    </citation>
    <scope>NUCLEOTIDE SEQUENCE [LARGE SCALE GENOMIC DNA]</scope>
    <source>
        <strain>Manfredo</strain>
    </source>
</reference>
<gene>
    <name type="ordered locus">SpyM51755</name>
</gene>
<accession>A2RGU5</accession>
<organism>
    <name type="scientific">Streptococcus pyogenes serotype M5 (strain Manfredo)</name>
    <dbReference type="NCBI Taxonomy" id="160491"/>
    <lineage>
        <taxon>Bacteria</taxon>
        <taxon>Bacillati</taxon>
        <taxon>Bacillota</taxon>
        <taxon>Bacilli</taxon>
        <taxon>Lactobacillales</taxon>
        <taxon>Streptococcaceae</taxon>
        <taxon>Streptococcus</taxon>
    </lineage>
</organism>
<proteinExistence type="inferred from homology"/>
<keyword id="KW-0963">Cytoplasm</keyword>
<keyword id="KW-0378">Hydrolase</keyword>
<keyword id="KW-0540">Nuclease</keyword>
<keyword id="KW-0690">Ribosome biogenesis</keyword>
<evidence type="ECO:0000255" key="1">
    <source>
        <dbReference type="HAMAP-Rule" id="MF_00651"/>
    </source>
</evidence>
<dbReference type="EC" id="3.1.-.-" evidence="1"/>
<dbReference type="EMBL" id="AM295007">
    <property type="protein sequence ID" value="CAM31077.1"/>
    <property type="molecule type" value="Genomic_DNA"/>
</dbReference>
<dbReference type="SMR" id="A2RGU5"/>
<dbReference type="KEGG" id="spf:SpyM51755"/>
<dbReference type="HOGENOM" id="CLU_098240_2_0_9"/>
<dbReference type="GO" id="GO:0005829">
    <property type="term" value="C:cytosol"/>
    <property type="evidence" value="ECO:0007669"/>
    <property type="project" value="TreeGrafter"/>
</dbReference>
<dbReference type="GO" id="GO:0004518">
    <property type="term" value="F:nuclease activity"/>
    <property type="evidence" value="ECO:0007669"/>
    <property type="project" value="UniProtKB-KW"/>
</dbReference>
<dbReference type="GO" id="GO:0000967">
    <property type="term" value="P:rRNA 5'-end processing"/>
    <property type="evidence" value="ECO:0007669"/>
    <property type="project" value="UniProtKB-UniRule"/>
</dbReference>
<dbReference type="CDD" id="cd16964">
    <property type="entry name" value="YqgF"/>
    <property type="match status" value="1"/>
</dbReference>
<dbReference type="FunFam" id="3.30.420.140:FF:000003">
    <property type="entry name" value="Putative pre-16S rRNA nuclease"/>
    <property type="match status" value="1"/>
</dbReference>
<dbReference type="Gene3D" id="3.30.420.140">
    <property type="entry name" value="YqgF/RNase H-like domain"/>
    <property type="match status" value="1"/>
</dbReference>
<dbReference type="HAMAP" id="MF_00651">
    <property type="entry name" value="Nuclease_YqgF"/>
    <property type="match status" value="1"/>
</dbReference>
<dbReference type="InterPro" id="IPR012337">
    <property type="entry name" value="RNaseH-like_sf"/>
</dbReference>
<dbReference type="InterPro" id="IPR005227">
    <property type="entry name" value="YqgF"/>
</dbReference>
<dbReference type="InterPro" id="IPR006641">
    <property type="entry name" value="YqgF/RNaseH-like_dom"/>
</dbReference>
<dbReference type="InterPro" id="IPR037027">
    <property type="entry name" value="YqgF/RNaseH-like_dom_sf"/>
</dbReference>
<dbReference type="NCBIfam" id="TIGR00250">
    <property type="entry name" value="RNAse_H_YqgF"/>
    <property type="match status" value="1"/>
</dbReference>
<dbReference type="PANTHER" id="PTHR33317">
    <property type="entry name" value="POLYNUCLEOTIDYL TRANSFERASE, RIBONUCLEASE H-LIKE SUPERFAMILY PROTEIN"/>
    <property type="match status" value="1"/>
</dbReference>
<dbReference type="PANTHER" id="PTHR33317:SF4">
    <property type="entry name" value="POLYNUCLEOTIDYL TRANSFERASE, RIBONUCLEASE H-LIKE SUPERFAMILY PROTEIN"/>
    <property type="match status" value="1"/>
</dbReference>
<dbReference type="Pfam" id="PF03652">
    <property type="entry name" value="RuvX"/>
    <property type="match status" value="1"/>
</dbReference>
<dbReference type="SMART" id="SM00732">
    <property type="entry name" value="YqgFc"/>
    <property type="match status" value="1"/>
</dbReference>
<dbReference type="SUPFAM" id="SSF53098">
    <property type="entry name" value="Ribonuclease H-like"/>
    <property type="match status" value="1"/>
</dbReference>
<feature type="chain" id="PRO_1000061571" description="Putative pre-16S rRNA nuclease">
    <location>
        <begin position="1"/>
        <end position="139"/>
    </location>
</feature>
<comment type="function">
    <text evidence="1">Could be a nuclease involved in processing of the 5'-end of pre-16S rRNA.</text>
</comment>
<comment type="subcellular location">
    <subcellularLocation>
        <location evidence="1">Cytoplasm</location>
    </subcellularLocation>
</comment>
<comment type="similarity">
    <text evidence="1">Belongs to the YqgF nuclease family.</text>
</comment>
<protein>
    <recommendedName>
        <fullName evidence="1">Putative pre-16S rRNA nuclease</fullName>
        <ecNumber evidence="1">3.1.-.-</ecNumber>
    </recommendedName>
</protein>